<keyword id="KW-0004">4Fe-4S</keyword>
<keyword id="KW-0067">ATP-binding</keyword>
<keyword id="KW-0963">Cytoplasm</keyword>
<keyword id="KW-0408">Iron</keyword>
<keyword id="KW-0411">Iron-sulfur</keyword>
<keyword id="KW-0479">Metal-binding</keyword>
<keyword id="KW-0547">Nucleotide-binding</keyword>
<keyword id="KW-1185">Reference proteome</keyword>
<accession>Q0CVD6</accession>
<reference key="1">
    <citation type="submission" date="2005-09" db="EMBL/GenBank/DDBJ databases">
        <title>Annotation of the Aspergillus terreus NIH2624 genome.</title>
        <authorList>
            <person name="Birren B.W."/>
            <person name="Lander E.S."/>
            <person name="Galagan J.E."/>
            <person name="Nusbaum C."/>
            <person name="Devon K."/>
            <person name="Henn M."/>
            <person name="Ma L.-J."/>
            <person name="Jaffe D.B."/>
            <person name="Butler J."/>
            <person name="Alvarez P."/>
            <person name="Gnerre S."/>
            <person name="Grabherr M."/>
            <person name="Kleber M."/>
            <person name="Mauceli E.W."/>
            <person name="Brockman W."/>
            <person name="Rounsley S."/>
            <person name="Young S.K."/>
            <person name="LaButti K."/>
            <person name="Pushparaj V."/>
            <person name="DeCaprio D."/>
            <person name="Crawford M."/>
            <person name="Koehrsen M."/>
            <person name="Engels R."/>
            <person name="Montgomery P."/>
            <person name="Pearson M."/>
            <person name="Howarth C."/>
            <person name="Larson L."/>
            <person name="Luoma S."/>
            <person name="White J."/>
            <person name="Alvarado L."/>
            <person name="Kodira C.D."/>
            <person name="Zeng Q."/>
            <person name="Oleary S."/>
            <person name="Yandava C."/>
            <person name="Denning D.W."/>
            <person name="Nierman W.C."/>
            <person name="Milne T."/>
            <person name="Madden K."/>
        </authorList>
    </citation>
    <scope>NUCLEOTIDE SEQUENCE [LARGE SCALE GENOMIC DNA]</scope>
    <source>
        <strain>NIH 2624 / FGSC A1156</strain>
    </source>
</reference>
<gene>
    <name type="primary">nbp35</name>
    <name type="ORF">ATEG_02348</name>
</gene>
<dbReference type="EMBL" id="CH476596">
    <property type="protein sequence ID" value="EAU37310.1"/>
    <property type="molecule type" value="Genomic_DNA"/>
</dbReference>
<dbReference type="RefSeq" id="XP_001211526.1">
    <property type="nucleotide sequence ID" value="XM_001211526.1"/>
</dbReference>
<dbReference type="SMR" id="Q0CVD6"/>
<dbReference type="STRING" id="341663.Q0CVD6"/>
<dbReference type="EnsemblFungi" id="EAU37310">
    <property type="protein sequence ID" value="EAU37310"/>
    <property type="gene ID" value="ATEG_02348"/>
</dbReference>
<dbReference type="GeneID" id="4317288"/>
<dbReference type="VEuPathDB" id="FungiDB:ATEG_02348"/>
<dbReference type="eggNOG" id="KOG3022">
    <property type="taxonomic scope" value="Eukaryota"/>
</dbReference>
<dbReference type="HOGENOM" id="CLU_024839_0_1_1"/>
<dbReference type="OMA" id="VSGCPMR"/>
<dbReference type="OrthoDB" id="1741334at2759"/>
<dbReference type="Proteomes" id="UP000007963">
    <property type="component" value="Unassembled WGS sequence"/>
</dbReference>
<dbReference type="GO" id="GO:0005829">
    <property type="term" value="C:cytosol"/>
    <property type="evidence" value="ECO:0007669"/>
    <property type="project" value="TreeGrafter"/>
</dbReference>
<dbReference type="GO" id="GO:0051539">
    <property type="term" value="F:4 iron, 4 sulfur cluster binding"/>
    <property type="evidence" value="ECO:0007669"/>
    <property type="project" value="UniProtKB-UniRule"/>
</dbReference>
<dbReference type="GO" id="GO:0005524">
    <property type="term" value="F:ATP binding"/>
    <property type="evidence" value="ECO:0007669"/>
    <property type="project" value="UniProtKB-KW"/>
</dbReference>
<dbReference type="GO" id="GO:0140663">
    <property type="term" value="F:ATP-dependent FeS chaperone activity"/>
    <property type="evidence" value="ECO:0007669"/>
    <property type="project" value="InterPro"/>
</dbReference>
<dbReference type="GO" id="GO:0046872">
    <property type="term" value="F:metal ion binding"/>
    <property type="evidence" value="ECO:0007669"/>
    <property type="project" value="UniProtKB-KW"/>
</dbReference>
<dbReference type="GO" id="GO:0016226">
    <property type="term" value="P:iron-sulfur cluster assembly"/>
    <property type="evidence" value="ECO:0007669"/>
    <property type="project" value="UniProtKB-UniRule"/>
</dbReference>
<dbReference type="CDD" id="cd02037">
    <property type="entry name" value="Mrp_NBP35"/>
    <property type="match status" value="1"/>
</dbReference>
<dbReference type="FunFam" id="3.40.50.300:FF:000427">
    <property type="entry name" value="Cytosolic Fe-S cluster assembly factor NUBP1"/>
    <property type="match status" value="1"/>
</dbReference>
<dbReference type="Gene3D" id="3.40.50.300">
    <property type="entry name" value="P-loop containing nucleotide triphosphate hydrolases"/>
    <property type="match status" value="1"/>
</dbReference>
<dbReference type="HAMAP" id="MF_02040">
    <property type="entry name" value="Mrp_NBP35"/>
    <property type="match status" value="1"/>
</dbReference>
<dbReference type="HAMAP" id="MF_03038">
    <property type="entry name" value="NUBP1"/>
    <property type="match status" value="1"/>
</dbReference>
<dbReference type="InterPro" id="IPR000808">
    <property type="entry name" value="Mrp-like_CS"/>
</dbReference>
<dbReference type="InterPro" id="IPR019591">
    <property type="entry name" value="Mrp/NBP35_ATP-bd"/>
</dbReference>
<dbReference type="InterPro" id="IPR028601">
    <property type="entry name" value="NUBP1/Nbp35"/>
</dbReference>
<dbReference type="InterPro" id="IPR027417">
    <property type="entry name" value="P-loop_NTPase"/>
</dbReference>
<dbReference type="InterPro" id="IPR033756">
    <property type="entry name" value="YlxH/NBP35"/>
</dbReference>
<dbReference type="PANTHER" id="PTHR23264:SF35">
    <property type="entry name" value="CYTOSOLIC FE-S CLUSTER ASSEMBLY FACTOR NUBP1"/>
    <property type="match status" value="1"/>
</dbReference>
<dbReference type="PANTHER" id="PTHR23264">
    <property type="entry name" value="NUCLEOTIDE-BINDING PROTEIN NBP35 YEAST -RELATED"/>
    <property type="match status" value="1"/>
</dbReference>
<dbReference type="Pfam" id="PF10609">
    <property type="entry name" value="ParA"/>
    <property type="match status" value="1"/>
</dbReference>
<dbReference type="SUPFAM" id="SSF52540">
    <property type="entry name" value="P-loop containing nucleoside triphosphate hydrolases"/>
    <property type="match status" value="1"/>
</dbReference>
<dbReference type="PROSITE" id="PS01215">
    <property type="entry name" value="MRP"/>
    <property type="match status" value="1"/>
</dbReference>
<comment type="function">
    <text evidence="1">Component of the cytosolic iron-sulfur (Fe/S) protein assembly (CIA) machinery. Required for maturation of extramitochondrial Fe-S proteins. The nbp35-cfd1 heterotetramer forms a Fe-S scaffold complex, mediating the de novo assembly of an Fe-S cluster and its transfer to target apoproteins.</text>
</comment>
<comment type="cofactor">
    <cofactor evidence="1">
        <name>[4Fe-4S] cluster</name>
        <dbReference type="ChEBI" id="CHEBI:49883"/>
    </cofactor>
    <text evidence="1">Binds 4 [4Fe-4S] clusters per heterotetramer. Contains two stable clusters in the N-termini of nbp35 and two labile, bridging clusters between subunits of the nbp35-cfd1 heterotetramer.</text>
</comment>
<comment type="subunit">
    <text evidence="1">Heterotetramer of 2 nbp35 and 2 cfd1 chains.</text>
</comment>
<comment type="subcellular location">
    <subcellularLocation>
        <location evidence="1">Cytoplasm</location>
    </subcellularLocation>
</comment>
<comment type="similarity">
    <text evidence="1">Belongs to the Mrp/NBP35 ATP-binding proteins family. NUBP1/NBP35 subfamily.</text>
</comment>
<sequence length="348" mass="37022">MAPSLEEPTAANIDALSKTAPNLVAPEPEHCPGPESEQAGKGDACAGCPNQNICATAPKGPDPDVAIITERLSQIRHKILVLSGKGGVGKSTFSSLLAHAFAANPDSDVGIMDTDLCGPSIAKMMGVEAETIHVSNAGWSPVWVTDNLGAMSIQFMLPNRDDAIIWRGPKKNGLIKQFLKDVDWGELDYLIVDTPPGTSDEHLSVNSLLKESGVDGAVIVTTPQEVSLQDVRKEIDFCRKAGIRILGLVENMSGFVCTNCGHESTIFRATTGGGKRLAKKMGIPFLGSVPLDPRIGQACDYGESFVDAFPDSPASTAIKQRSNGFGVYGMEKCDTIFKTADLADTREY</sequence>
<proteinExistence type="inferred from homology"/>
<organism>
    <name type="scientific">Aspergillus terreus (strain NIH 2624 / FGSC A1156)</name>
    <dbReference type="NCBI Taxonomy" id="341663"/>
    <lineage>
        <taxon>Eukaryota</taxon>
        <taxon>Fungi</taxon>
        <taxon>Dikarya</taxon>
        <taxon>Ascomycota</taxon>
        <taxon>Pezizomycotina</taxon>
        <taxon>Eurotiomycetes</taxon>
        <taxon>Eurotiomycetidae</taxon>
        <taxon>Eurotiales</taxon>
        <taxon>Aspergillaceae</taxon>
        <taxon>Aspergillus</taxon>
        <taxon>Aspergillus subgen. Circumdati</taxon>
    </lineage>
</organism>
<protein>
    <recommendedName>
        <fullName evidence="1">Cytosolic Fe-S cluster assembly factor nbp35</fullName>
    </recommendedName>
    <alternativeName>
        <fullName evidence="1">Nucleotide-binding protein 35</fullName>
    </alternativeName>
</protein>
<name>NBP35_ASPTN</name>
<feature type="chain" id="PRO_0000278890" description="Cytosolic Fe-S cluster assembly factor nbp35">
    <location>
        <begin position="1"/>
        <end position="348"/>
    </location>
</feature>
<feature type="region of interest" description="Disordered" evidence="2">
    <location>
        <begin position="23"/>
        <end position="42"/>
    </location>
</feature>
<feature type="binding site" evidence="1">
    <location>
        <position position="31"/>
    </location>
    <ligand>
        <name>[4Fe-4S] cluster</name>
        <dbReference type="ChEBI" id="CHEBI:49883"/>
        <label>1</label>
    </ligand>
</feature>
<feature type="binding site" evidence="1">
    <location>
        <position position="45"/>
    </location>
    <ligand>
        <name>[4Fe-4S] cluster</name>
        <dbReference type="ChEBI" id="CHEBI:49883"/>
        <label>1</label>
    </ligand>
</feature>
<feature type="binding site" evidence="1">
    <location>
        <position position="48"/>
    </location>
    <ligand>
        <name>[4Fe-4S] cluster</name>
        <dbReference type="ChEBI" id="CHEBI:49883"/>
        <label>1</label>
    </ligand>
</feature>
<feature type="binding site" evidence="1">
    <location>
        <position position="54"/>
    </location>
    <ligand>
        <name>[4Fe-4S] cluster</name>
        <dbReference type="ChEBI" id="CHEBI:49883"/>
        <label>1</label>
    </ligand>
</feature>
<feature type="binding site" evidence="1">
    <location>
        <begin position="84"/>
        <end position="91"/>
    </location>
    <ligand>
        <name>ATP</name>
        <dbReference type="ChEBI" id="CHEBI:30616"/>
    </ligand>
</feature>
<feature type="binding site" evidence="1">
    <location>
        <position position="257"/>
    </location>
    <ligand>
        <name>[4Fe-4S] cluster</name>
        <dbReference type="ChEBI" id="CHEBI:49883"/>
        <label>2</label>
        <note>ligand shared with heterodimeric partner</note>
    </ligand>
</feature>
<feature type="binding site" evidence="1">
    <location>
        <position position="260"/>
    </location>
    <ligand>
        <name>[4Fe-4S] cluster</name>
        <dbReference type="ChEBI" id="CHEBI:49883"/>
        <label>2</label>
        <note>ligand shared with heterodimeric partner</note>
    </ligand>
</feature>
<evidence type="ECO:0000255" key="1">
    <source>
        <dbReference type="HAMAP-Rule" id="MF_03038"/>
    </source>
</evidence>
<evidence type="ECO:0000256" key="2">
    <source>
        <dbReference type="SAM" id="MobiDB-lite"/>
    </source>
</evidence>